<dbReference type="EC" id="4.1.1.19" evidence="1"/>
<dbReference type="EMBL" id="BX548175">
    <property type="protein sequence ID" value="CAE22324.1"/>
    <property type="molecule type" value="Genomic_DNA"/>
</dbReference>
<dbReference type="RefSeq" id="WP_011131514.1">
    <property type="nucleotide sequence ID" value="NC_005071.1"/>
</dbReference>
<dbReference type="SMR" id="Q7TUJ9"/>
<dbReference type="KEGG" id="pmt:PMT_2150"/>
<dbReference type="eggNOG" id="COG1166">
    <property type="taxonomic scope" value="Bacteria"/>
</dbReference>
<dbReference type="HOGENOM" id="CLU_027243_1_0_3"/>
<dbReference type="OrthoDB" id="9802658at2"/>
<dbReference type="Proteomes" id="UP000001423">
    <property type="component" value="Chromosome"/>
</dbReference>
<dbReference type="GO" id="GO:0008792">
    <property type="term" value="F:arginine decarboxylase activity"/>
    <property type="evidence" value="ECO:0007669"/>
    <property type="project" value="UniProtKB-UniRule"/>
</dbReference>
<dbReference type="GO" id="GO:0046872">
    <property type="term" value="F:metal ion binding"/>
    <property type="evidence" value="ECO:0007669"/>
    <property type="project" value="UniProtKB-KW"/>
</dbReference>
<dbReference type="GO" id="GO:0006527">
    <property type="term" value="P:arginine catabolic process"/>
    <property type="evidence" value="ECO:0007669"/>
    <property type="project" value="InterPro"/>
</dbReference>
<dbReference type="GO" id="GO:0008295">
    <property type="term" value="P:spermidine biosynthetic process"/>
    <property type="evidence" value="ECO:0007669"/>
    <property type="project" value="UniProtKB-UniRule"/>
</dbReference>
<dbReference type="CDD" id="cd06830">
    <property type="entry name" value="PLPDE_III_ADC"/>
    <property type="match status" value="1"/>
</dbReference>
<dbReference type="FunFam" id="3.20.20.10:FF:000001">
    <property type="entry name" value="Biosynthetic arginine decarboxylase"/>
    <property type="match status" value="1"/>
</dbReference>
<dbReference type="Gene3D" id="1.20.58.930">
    <property type="match status" value="1"/>
</dbReference>
<dbReference type="Gene3D" id="3.20.20.10">
    <property type="entry name" value="Alanine racemase"/>
    <property type="match status" value="1"/>
</dbReference>
<dbReference type="Gene3D" id="2.40.37.10">
    <property type="entry name" value="Lyase, Ornithine Decarboxylase, Chain A, domain 1"/>
    <property type="match status" value="1"/>
</dbReference>
<dbReference type="HAMAP" id="MF_01417">
    <property type="entry name" value="SpeA"/>
    <property type="match status" value="1"/>
</dbReference>
<dbReference type="InterPro" id="IPR009006">
    <property type="entry name" value="Ala_racemase/Decarboxylase_C"/>
</dbReference>
<dbReference type="InterPro" id="IPR040634">
    <property type="entry name" value="Arg_decarb_HB"/>
</dbReference>
<dbReference type="InterPro" id="IPR041128">
    <property type="entry name" value="Arg_decarbox_C"/>
</dbReference>
<dbReference type="InterPro" id="IPR002985">
    <property type="entry name" value="Arg_decrbxlase"/>
</dbReference>
<dbReference type="InterPro" id="IPR022657">
    <property type="entry name" value="De-COase2_CS"/>
</dbReference>
<dbReference type="InterPro" id="IPR022644">
    <property type="entry name" value="De-COase2_N"/>
</dbReference>
<dbReference type="InterPro" id="IPR022653">
    <property type="entry name" value="De-COase2_pyr-phos_BS"/>
</dbReference>
<dbReference type="InterPro" id="IPR000183">
    <property type="entry name" value="Orn/DAP/Arg_de-COase"/>
</dbReference>
<dbReference type="InterPro" id="IPR029066">
    <property type="entry name" value="PLP-binding_barrel"/>
</dbReference>
<dbReference type="NCBIfam" id="NF003763">
    <property type="entry name" value="PRK05354.1"/>
    <property type="match status" value="1"/>
</dbReference>
<dbReference type="NCBIfam" id="TIGR01273">
    <property type="entry name" value="speA"/>
    <property type="match status" value="1"/>
</dbReference>
<dbReference type="PANTHER" id="PTHR43295">
    <property type="entry name" value="ARGININE DECARBOXYLASE"/>
    <property type="match status" value="1"/>
</dbReference>
<dbReference type="PANTHER" id="PTHR43295:SF9">
    <property type="entry name" value="BIOSYNTHETIC ARGININE DECARBOXYLASE"/>
    <property type="match status" value="1"/>
</dbReference>
<dbReference type="Pfam" id="PF17810">
    <property type="entry name" value="Arg_decarb_HB"/>
    <property type="match status" value="1"/>
</dbReference>
<dbReference type="Pfam" id="PF17944">
    <property type="entry name" value="Arg_decarbox_C"/>
    <property type="match status" value="1"/>
</dbReference>
<dbReference type="Pfam" id="PF02784">
    <property type="entry name" value="Orn_Arg_deC_N"/>
    <property type="match status" value="1"/>
</dbReference>
<dbReference type="PIRSF" id="PIRSF001336">
    <property type="entry name" value="Arg_decrbxlase"/>
    <property type="match status" value="1"/>
</dbReference>
<dbReference type="PRINTS" id="PR01180">
    <property type="entry name" value="ARGDCRBXLASE"/>
</dbReference>
<dbReference type="PRINTS" id="PR01179">
    <property type="entry name" value="ODADCRBXLASE"/>
</dbReference>
<dbReference type="SUPFAM" id="SSF50621">
    <property type="entry name" value="Alanine racemase C-terminal domain-like"/>
    <property type="match status" value="1"/>
</dbReference>
<dbReference type="SUPFAM" id="SSF51419">
    <property type="entry name" value="PLP-binding barrel"/>
    <property type="match status" value="1"/>
</dbReference>
<dbReference type="PROSITE" id="PS00878">
    <property type="entry name" value="ODR_DC_2_1"/>
    <property type="match status" value="1"/>
</dbReference>
<dbReference type="PROSITE" id="PS00879">
    <property type="entry name" value="ODR_DC_2_2"/>
    <property type="match status" value="1"/>
</dbReference>
<proteinExistence type="inferred from homology"/>
<evidence type="ECO:0000255" key="1">
    <source>
        <dbReference type="HAMAP-Rule" id="MF_01417"/>
    </source>
</evidence>
<accession>Q7TUJ9</accession>
<protein>
    <recommendedName>
        <fullName evidence="1">Biosynthetic arginine decarboxylase</fullName>
        <shortName evidence="1">ADC</shortName>
        <ecNumber evidence="1">4.1.1.19</ecNumber>
    </recommendedName>
</protein>
<organism>
    <name type="scientific">Prochlorococcus marinus (strain MIT 9313)</name>
    <dbReference type="NCBI Taxonomy" id="74547"/>
    <lineage>
        <taxon>Bacteria</taxon>
        <taxon>Bacillati</taxon>
        <taxon>Cyanobacteriota</taxon>
        <taxon>Cyanophyceae</taxon>
        <taxon>Synechococcales</taxon>
        <taxon>Prochlorococcaceae</taxon>
        <taxon>Prochlorococcus</taxon>
    </lineage>
</organism>
<name>SPEA_PROMM</name>
<reference key="1">
    <citation type="journal article" date="2003" name="Nature">
        <title>Genome divergence in two Prochlorococcus ecotypes reflects oceanic niche differentiation.</title>
        <authorList>
            <person name="Rocap G."/>
            <person name="Larimer F.W."/>
            <person name="Lamerdin J.E."/>
            <person name="Malfatti S."/>
            <person name="Chain P."/>
            <person name="Ahlgren N.A."/>
            <person name="Arellano A."/>
            <person name="Coleman M."/>
            <person name="Hauser L."/>
            <person name="Hess W.R."/>
            <person name="Johnson Z.I."/>
            <person name="Land M.L."/>
            <person name="Lindell D."/>
            <person name="Post A.F."/>
            <person name="Regala W."/>
            <person name="Shah M."/>
            <person name="Shaw S.L."/>
            <person name="Steglich C."/>
            <person name="Sullivan M.B."/>
            <person name="Ting C.S."/>
            <person name="Tolonen A."/>
            <person name="Webb E.A."/>
            <person name="Zinser E.R."/>
            <person name="Chisholm S.W."/>
        </authorList>
    </citation>
    <scope>NUCLEOTIDE SEQUENCE [LARGE SCALE GENOMIC DNA]</scope>
    <source>
        <strain>MIT 9313</strain>
    </source>
</reference>
<keyword id="KW-0210">Decarboxylase</keyword>
<keyword id="KW-0456">Lyase</keyword>
<keyword id="KW-0460">Magnesium</keyword>
<keyword id="KW-0479">Metal-binding</keyword>
<keyword id="KW-0620">Polyamine biosynthesis</keyword>
<keyword id="KW-0663">Pyridoxal phosphate</keyword>
<keyword id="KW-1185">Reference proteome</keyword>
<keyword id="KW-0745">Spermidine biosynthesis</keyword>
<sequence>MSAADPIQDNKSWTVADSAALYGLDHWGHPYFSANANGHVQVQPRGDQGSCLDLVELVEELKSRNLNLPLLIRFDDILEDRLERLHSAFEEAISKYGYAGRYQGVFPVKCNQQRHVVEQLVESGRQWHFGLEAGSKAELLIALSLVNDPEALLICNGYKDQRYIETAILARRLGRQPVVVIEQPDEVERIIRSSQELGAAPFLGVRAKLTTRSTGHWSSSVGEKAKFGLSVPDLLATVEALRQADLLSDLRLLHFHIGSQINDIAVLKDALQEAAQIYVELTKLGAPMGYLDVGGGLGVDYDGSRSASAASTNYSLQNYANDVVATVRECCKPHGITLPILVSESGRAIASHFSILVFDVLGTGTVPGAIPKQTVEEPLTIHNLRETLSGVMATQKGAVSEISRLQEAWNDAIKFKEDALAAFRLGYISLPERALAEQLTGACAEAIMGQLPCNETIPDDLQSLRAVLASTYYANLSIFRSAPDTWAIEQLFPLMPIHRLNEEPTQLGHFADLTCDSDGKLDRFIGNGQTKTLLELHNLRQNEAYMIGMFLAGAYQEVMGNLHNLFGSTNAVHIRLTTAGGYQVDHVVRGNTNSEVLEAMEHNPELLLERLRLASELAIQRGELKINDVRRLMDHLEASLRQTTYLQG</sequence>
<feature type="chain" id="PRO_0000149969" description="Biosynthetic arginine decarboxylase">
    <location>
        <begin position="1"/>
        <end position="648"/>
    </location>
</feature>
<feature type="binding site" evidence="1">
    <location>
        <begin position="291"/>
        <end position="301"/>
    </location>
    <ligand>
        <name>substrate</name>
    </ligand>
</feature>
<feature type="modified residue" description="N6-(pyridoxal phosphate)lysine" evidence="1">
    <location>
        <position position="109"/>
    </location>
</feature>
<gene>
    <name evidence="1" type="primary">speA</name>
    <name type="ordered locus">PMT_2150</name>
</gene>
<comment type="function">
    <text evidence="1">Catalyzes the biosynthesis of agmatine from arginine.</text>
</comment>
<comment type="catalytic activity">
    <reaction evidence="1">
        <text>L-arginine + H(+) = agmatine + CO2</text>
        <dbReference type="Rhea" id="RHEA:17641"/>
        <dbReference type="ChEBI" id="CHEBI:15378"/>
        <dbReference type="ChEBI" id="CHEBI:16526"/>
        <dbReference type="ChEBI" id="CHEBI:32682"/>
        <dbReference type="ChEBI" id="CHEBI:58145"/>
        <dbReference type="EC" id="4.1.1.19"/>
    </reaction>
</comment>
<comment type="cofactor">
    <cofactor evidence="1">
        <name>Mg(2+)</name>
        <dbReference type="ChEBI" id="CHEBI:18420"/>
    </cofactor>
</comment>
<comment type="cofactor">
    <cofactor evidence="1">
        <name>pyridoxal 5'-phosphate</name>
        <dbReference type="ChEBI" id="CHEBI:597326"/>
    </cofactor>
</comment>
<comment type="similarity">
    <text evidence="1">Belongs to the Orn/Lys/Arg decarboxylase class-II family. SpeA subfamily.</text>
</comment>